<organism>
    <name type="scientific">Listeria innocua serovar 6a (strain ATCC BAA-680 / CLIP 11262)</name>
    <dbReference type="NCBI Taxonomy" id="272626"/>
    <lineage>
        <taxon>Bacteria</taxon>
        <taxon>Bacillati</taxon>
        <taxon>Bacillota</taxon>
        <taxon>Bacilli</taxon>
        <taxon>Bacillales</taxon>
        <taxon>Listeriaceae</taxon>
        <taxon>Listeria</taxon>
    </lineage>
</organism>
<keyword id="KW-0687">Ribonucleoprotein</keyword>
<keyword id="KW-0689">Ribosomal protein</keyword>
<keyword id="KW-0694">RNA-binding</keyword>
<keyword id="KW-0699">rRNA-binding</keyword>
<gene>
    <name evidence="1" type="primary">rplV</name>
    <name type="ordered locus">lin2776</name>
</gene>
<evidence type="ECO:0000255" key="1">
    <source>
        <dbReference type="HAMAP-Rule" id="MF_01331"/>
    </source>
</evidence>
<evidence type="ECO:0000305" key="2"/>
<dbReference type="EMBL" id="AL596173">
    <property type="protein sequence ID" value="CAC98002.1"/>
    <property type="molecule type" value="Genomic_DNA"/>
</dbReference>
<dbReference type="PIR" id="AB1779">
    <property type="entry name" value="AB1779"/>
</dbReference>
<dbReference type="RefSeq" id="WP_003727697.1">
    <property type="nucleotide sequence ID" value="NC_003212.1"/>
</dbReference>
<dbReference type="SMR" id="Q7ANU3"/>
<dbReference type="STRING" id="272626.gene:17567163"/>
<dbReference type="GeneID" id="93240508"/>
<dbReference type="KEGG" id="lin:rplV"/>
<dbReference type="eggNOG" id="COG0091">
    <property type="taxonomic scope" value="Bacteria"/>
</dbReference>
<dbReference type="HOGENOM" id="CLU_083987_3_3_9"/>
<dbReference type="OrthoDB" id="9805969at2"/>
<dbReference type="Proteomes" id="UP000002513">
    <property type="component" value="Chromosome"/>
</dbReference>
<dbReference type="GO" id="GO:0022625">
    <property type="term" value="C:cytosolic large ribosomal subunit"/>
    <property type="evidence" value="ECO:0007669"/>
    <property type="project" value="TreeGrafter"/>
</dbReference>
<dbReference type="GO" id="GO:0019843">
    <property type="term" value="F:rRNA binding"/>
    <property type="evidence" value="ECO:0007669"/>
    <property type="project" value="UniProtKB-UniRule"/>
</dbReference>
<dbReference type="GO" id="GO:0003735">
    <property type="term" value="F:structural constituent of ribosome"/>
    <property type="evidence" value="ECO:0007669"/>
    <property type="project" value="InterPro"/>
</dbReference>
<dbReference type="GO" id="GO:0006412">
    <property type="term" value="P:translation"/>
    <property type="evidence" value="ECO:0007669"/>
    <property type="project" value="UniProtKB-UniRule"/>
</dbReference>
<dbReference type="CDD" id="cd00336">
    <property type="entry name" value="Ribosomal_L22"/>
    <property type="match status" value="1"/>
</dbReference>
<dbReference type="FunFam" id="3.90.470.10:FF:000001">
    <property type="entry name" value="50S ribosomal protein L22"/>
    <property type="match status" value="1"/>
</dbReference>
<dbReference type="Gene3D" id="3.90.470.10">
    <property type="entry name" value="Ribosomal protein L22/L17"/>
    <property type="match status" value="1"/>
</dbReference>
<dbReference type="HAMAP" id="MF_01331_B">
    <property type="entry name" value="Ribosomal_uL22_B"/>
    <property type="match status" value="1"/>
</dbReference>
<dbReference type="InterPro" id="IPR001063">
    <property type="entry name" value="Ribosomal_uL22"/>
</dbReference>
<dbReference type="InterPro" id="IPR005727">
    <property type="entry name" value="Ribosomal_uL22_bac/chlpt-type"/>
</dbReference>
<dbReference type="InterPro" id="IPR047867">
    <property type="entry name" value="Ribosomal_uL22_bac/org-type"/>
</dbReference>
<dbReference type="InterPro" id="IPR018260">
    <property type="entry name" value="Ribosomal_uL22_CS"/>
</dbReference>
<dbReference type="InterPro" id="IPR036394">
    <property type="entry name" value="Ribosomal_uL22_sf"/>
</dbReference>
<dbReference type="NCBIfam" id="TIGR01044">
    <property type="entry name" value="rplV_bact"/>
    <property type="match status" value="1"/>
</dbReference>
<dbReference type="PANTHER" id="PTHR13501">
    <property type="entry name" value="CHLOROPLAST 50S RIBOSOMAL PROTEIN L22-RELATED"/>
    <property type="match status" value="1"/>
</dbReference>
<dbReference type="PANTHER" id="PTHR13501:SF8">
    <property type="entry name" value="LARGE RIBOSOMAL SUBUNIT PROTEIN UL22M"/>
    <property type="match status" value="1"/>
</dbReference>
<dbReference type="Pfam" id="PF00237">
    <property type="entry name" value="Ribosomal_L22"/>
    <property type="match status" value="1"/>
</dbReference>
<dbReference type="SUPFAM" id="SSF54843">
    <property type="entry name" value="Ribosomal protein L22"/>
    <property type="match status" value="1"/>
</dbReference>
<dbReference type="PROSITE" id="PS00464">
    <property type="entry name" value="RIBOSOMAL_L22"/>
    <property type="match status" value="1"/>
</dbReference>
<reference key="1">
    <citation type="journal article" date="2001" name="Science">
        <title>Comparative genomics of Listeria species.</title>
        <authorList>
            <person name="Glaser P."/>
            <person name="Frangeul L."/>
            <person name="Buchrieser C."/>
            <person name="Rusniok C."/>
            <person name="Amend A."/>
            <person name="Baquero F."/>
            <person name="Berche P."/>
            <person name="Bloecker H."/>
            <person name="Brandt P."/>
            <person name="Chakraborty T."/>
            <person name="Charbit A."/>
            <person name="Chetouani F."/>
            <person name="Couve E."/>
            <person name="de Daruvar A."/>
            <person name="Dehoux P."/>
            <person name="Domann E."/>
            <person name="Dominguez-Bernal G."/>
            <person name="Duchaud E."/>
            <person name="Durant L."/>
            <person name="Dussurget O."/>
            <person name="Entian K.-D."/>
            <person name="Fsihi H."/>
            <person name="Garcia-del Portillo F."/>
            <person name="Garrido P."/>
            <person name="Gautier L."/>
            <person name="Goebel W."/>
            <person name="Gomez-Lopez N."/>
            <person name="Hain T."/>
            <person name="Hauf J."/>
            <person name="Jackson D."/>
            <person name="Jones L.-M."/>
            <person name="Kaerst U."/>
            <person name="Kreft J."/>
            <person name="Kuhn M."/>
            <person name="Kunst F."/>
            <person name="Kurapkat G."/>
            <person name="Madueno E."/>
            <person name="Maitournam A."/>
            <person name="Mata Vicente J."/>
            <person name="Ng E."/>
            <person name="Nedjari H."/>
            <person name="Nordsiek G."/>
            <person name="Novella S."/>
            <person name="de Pablos B."/>
            <person name="Perez-Diaz J.-C."/>
            <person name="Purcell R."/>
            <person name="Remmel B."/>
            <person name="Rose M."/>
            <person name="Schlueter T."/>
            <person name="Simoes N."/>
            <person name="Tierrez A."/>
            <person name="Vazquez-Boland J.-A."/>
            <person name="Voss H."/>
            <person name="Wehland J."/>
            <person name="Cossart P."/>
        </authorList>
    </citation>
    <scope>NUCLEOTIDE SEQUENCE [LARGE SCALE GENOMIC DNA]</scope>
    <source>
        <strain>ATCC BAA-680 / CLIP 11262</strain>
    </source>
</reference>
<comment type="function">
    <text evidence="1">This protein binds specifically to 23S rRNA; its binding is stimulated by other ribosomal proteins, e.g. L4, L17, and L20. It is important during the early stages of 50S assembly. It makes multiple contacts with different domains of the 23S rRNA in the assembled 50S subunit and ribosome (By similarity).</text>
</comment>
<comment type="function">
    <text evidence="1">The globular domain of the protein is located near the polypeptide exit tunnel on the outside of the subunit, while an extended beta-hairpin is found that lines the wall of the exit tunnel in the center of the 70S ribosome.</text>
</comment>
<comment type="subunit">
    <text evidence="1">Part of the 50S ribosomal subunit.</text>
</comment>
<comment type="similarity">
    <text evidence="1">Belongs to the universal ribosomal protein uL22 family.</text>
</comment>
<feature type="chain" id="PRO_0000125170" description="Large ribosomal subunit protein uL22">
    <location>
        <begin position="1"/>
        <end position="118"/>
    </location>
</feature>
<accession>Q7ANU3</accession>
<protein>
    <recommendedName>
        <fullName evidence="1">Large ribosomal subunit protein uL22</fullName>
    </recommendedName>
    <alternativeName>
        <fullName evidence="2">50S ribosomal protein L22</fullName>
    </alternativeName>
</protein>
<name>RL22_LISIN</name>
<proteinExistence type="inferred from homology"/>
<sequence>MASEVTSAKAVAKTVRIAPRKARIVIDLIRGKQVGEAIAILKYTPRSASPIIEKVLKSAIANAEHNYDLDINNLVVEEAFVDEGPTLKRFRPRAQGRASAINKRTSHITVVVSEVKEG</sequence>